<protein>
    <recommendedName>
        <fullName evidence="1">Argininosuccinate synthase</fullName>
        <ecNumber evidence="1">6.3.4.5</ecNumber>
    </recommendedName>
    <alternativeName>
        <fullName evidence="1">Citrulline--aspartate ligase</fullName>
    </alternativeName>
</protein>
<comment type="catalytic activity">
    <reaction evidence="1">
        <text>L-citrulline + L-aspartate + ATP = 2-(N(omega)-L-arginino)succinate + AMP + diphosphate + H(+)</text>
        <dbReference type="Rhea" id="RHEA:10932"/>
        <dbReference type="ChEBI" id="CHEBI:15378"/>
        <dbReference type="ChEBI" id="CHEBI:29991"/>
        <dbReference type="ChEBI" id="CHEBI:30616"/>
        <dbReference type="ChEBI" id="CHEBI:33019"/>
        <dbReference type="ChEBI" id="CHEBI:57472"/>
        <dbReference type="ChEBI" id="CHEBI:57743"/>
        <dbReference type="ChEBI" id="CHEBI:456215"/>
        <dbReference type="EC" id="6.3.4.5"/>
    </reaction>
</comment>
<comment type="pathway">
    <text evidence="1">Amino-acid biosynthesis; L-arginine biosynthesis; L-arginine from L-ornithine and carbamoyl phosphate: step 2/3.</text>
</comment>
<comment type="subunit">
    <text evidence="1">Homotetramer.</text>
</comment>
<comment type="subcellular location">
    <subcellularLocation>
        <location evidence="1">Cytoplasm</location>
    </subcellularLocation>
</comment>
<comment type="similarity">
    <text evidence="1">Belongs to the argininosuccinate synthase family. Type 1 subfamily.</text>
</comment>
<accession>B1KXY1</accession>
<sequence length="397" mass="44807">MKEKVVLAYSGGLDTSIIIPWLKENYDLDVIAVCVNVGQGDDMDYVKTKAIKSGASKIYVEDVKEEFVVDYLYKAIKSEALYEQDYMLGTSFARPLMAKKLVEIAHKEQAKYICHGCTGKGNDQVRFEVGVKAQDPTIKIIAPWRIWDIKSREDAIDYAKKVGVEVPVTKKKIYSVDRNLWHVSHEGGDLEDLKNEHKEDMYFMVTPPEKAKDEPTYLEIYFEKGAPVKINGEFLNPVDIIDKLNTIGGENGIGIADIIENRLVGMKSRGIYETPAGTLLYAAHKKLESVTLDKYTYQYKKLVSAQYGELVYNGLWFTALREAIDAFVDKTQENVTGTVKLKLYKGNIKPCSVDTEYALYDEGISSFGESELYSHKDAEGFINLFGLPCKIKALKNF</sequence>
<feature type="chain" id="PRO_1000089032" description="Argininosuccinate synthase">
    <location>
        <begin position="1"/>
        <end position="397"/>
    </location>
</feature>
<feature type="binding site" evidence="1">
    <location>
        <begin position="8"/>
        <end position="16"/>
    </location>
    <ligand>
        <name>ATP</name>
        <dbReference type="ChEBI" id="CHEBI:30616"/>
    </ligand>
</feature>
<feature type="binding site" evidence="1">
    <location>
        <position position="86"/>
    </location>
    <ligand>
        <name>L-citrulline</name>
        <dbReference type="ChEBI" id="CHEBI:57743"/>
    </ligand>
</feature>
<feature type="binding site" evidence="1">
    <location>
        <position position="91"/>
    </location>
    <ligand>
        <name>L-citrulline</name>
        <dbReference type="ChEBI" id="CHEBI:57743"/>
    </ligand>
</feature>
<feature type="binding site" evidence="1">
    <location>
        <position position="116"/>
    </location>
    <ligand>
        <name>ATP</name>
        <dbReference type="ChEBI" id="CHEBI:30616"/>
    </ligand>
</feature>
<feature type="binding site" evidence="1">
    <location>
        <position position="118"/>
    </location>
    <ligand>
        <name>L-aspartate</name>
        <dbReference type="ChEBI" id="CHEBI:29991"/>
    </ligand>
</feature>
<feature type="binding site" evidence="1">
    <location>
        <position position="122"/>
    </location>
    <ligand>
        <name>L-aspartate</name>
        <dbReference type="ChEBI" id="CHEBI:29991"/>
    </ligand>
</feature>
<feature type="binding site" evidence="1">
    <location>
        <position position="122"/>
    </location>
    <ligand>
        <name>L-citrulline</name>
        <dbReference type="ChEBI" id="CHEBI:57743"/>
    </ligand>
</feature>
<feature type="binding site" evidence="1">
    <location>
        <position position="123"/>
    </location>
    <ligand>
        <name>L-aspartate</name>
        <dbReference type="ChEBI" id="CHEBI:29991"/>
    </ligand>
</feature>
<feature type="binding site" evidence="1">
    <location>
        <position position="126"/>
    </location>
    <ligand>
        <name>L-citrulline</name>
        <dbReference type="ChEBI" id="CHEBI:57743"/>
    </ligand>
</feature>
<feature type="binding site" evidence="1">
    <location>
        <position position="175"/>
    </location>
    <ligand>
        <name>L-citrulline</name>
        <dbReference type="ChEBI" id="CHEBI:57743"/>
    </ligand>
</feature>
<feature type="binding site" evidence="1">
    <location>
        <position position="184"/>
    </location>
    <ligand>
        <name>L-citrulline</name>
        <dbReference type="ChEBI" id="CHEBI:57743"/>
    </ligand>
</feature>
<feature type="binding site" evidence="1">
    <location>
        <position position="260"/>
    </location>
    <ligand>
        <name>L-citrulline</name>
        <dbReference type="ChEBI" id="CHEBI:57743"/>
    </ligand>
</feature>
<feature type="binding site" evidence="1">
    <location>
        <position position="272"/>
    </location>
    <ligand>
        <name>L-citrulline</name>
        <dbReference type="ChEBI" id="CHEBI:57743"/>
    </ligand>
</feature>
<organism>
    <name type="scientific">Clostridium botulinum (strain Loch Maree / Type A3)</name>
    <dbReference type="NCBI Taxonomy" id="498214"/>
    <lineage>
        <taxon>Bacteria</taxon>
        <taxon>Bacillati</taxon>
        <taxon>Bacillota</taxon>
        <taxon>Clostridia</taxon>
        <taxon>Eubacteriales</taxon>
        <taxon>Clostridiaceae</taxon>
        <taxon>Clostridium</taxon>
    </lineage>
</organism>
<evidence type="ECO:0000255" key="1">
    <source>
        <dbReference type="HAMAP-Rule" id="MF_00005"/>
    </source>
</evidence>
<keyword id="KW-0028">Amino-acid biosynthesis</keyword>
<keyword id="KW-0055">Arginine biosynthesis</keyword>
<keyword id="KW-0067">ATP-binding</keyword>
<keyword id="KW-0963">Cytoplasm</keyword>
<keyword id="KW-0436">Ligase</keyword>
<keyword id="KW-0547">Nucleotide-binding</keyword>
<reference key="1">
    <citation type="journal article" date="2007" name="PLoS ONE">
        <title>Analysis of the neurotoxin complex genes in Clostridium botulinum A1-A4 and B1 strains: BoNT/A3, /Ba4 and /B1 clusters are located within plasmids.</title>
        <authorList>
            <person name="Smith T.J."/>
            <person name="Hill K.K."/>
            <person name="Foley B.T."/>
            <person name="Detter J.C."/>
            <person name="Munk A.C."/>
            <person name="Bruce D.C."/>
            <person name="Doggett N.A."/>
            <person name="Smith L.A."/>
            <person name="Marks J.D."/>
            <person name="Xie G."/>
            <person name="Brettin T.S."/>
        </authorList>
    </citation>
    <scope>NUCLEOTIDE SEQUENCE [LARGE SCALE GENOMIC DNA]</scope>
    <source>
        <strain>Loch Maree / Type A3</strain>
    </source>
</reference>
<gene>
    <name evidence="1" type="primary">argG</name>
    <name type="ordered locus">CLK_2058</name>
</gene>
<name>ASSY_CLOBM</name>
<proteinExistence type="inferred from homology"/>
<dbReference type="EC" id="6.3.4.5" evidence="1"/>
<dbReference type="EMBL" id="CP000962">
    <property type="protein sequence ID" value="ACA54350.1"/>
    <property type="molecule type" value="Genomic_DNA"/>
</dbReference>
<dbReference type="RefSeq" id="WP_012340092.1">
    <property type="nucleotide sequence ID" value="NC_010520.1"/>
</dbReference>
<dbReference type="SMR" id="B1KXY1"/>
<dbReference type="KEGG" id="cbl:CLK_2058"/>
<dbReference type="HOGENOM" id="CLU_032784_4_2_9"/>
<dbReference type="UniPathway" id="UPA00068">
    <property type="reaction ID" value="UER00113"/>
</dbReference>
<dbReference type="GO" id="GO:0005737">
    <property type="term" value="C:cytoplasm"/>
    <property type="evidence" value="ECO:0007669"/>
    <property type="project" value="UniProtKB-SubCell"/>
</dbReference>
<dbReference type="GO" id="GO:0004055">
    <property type="term" value="F:argininosuccinate synthase activity"/>
    <property type="evidence" value="ECO:0007669"/>
    <property type="project" value="UniProtKB-UniRule"/>
</dbReference>
<dbReference type="GO" id="GO:0005524">
    <property type="term" value="F:ATP binding"/>
    <property type="evidence" value="ECO:0007669"/>
    <property type="project" value="UniProtKB-UniRule"/>
</dbReference>
<dbReference type="GO" id="GO:0000053">
    <property type="term" value="P:argininosuccinate metabolic process"/>
    <property type="evidence" value="ECO:0007669"/>
    <property type="project" value="TreeGrafter"/>
</dbReference>
<dbReference type="GO" id="GO:0006526">
    <property type="term" value="P:L-arginine biosynthetic process"/>
    <property type="evidence" value="ECO:0007669"/>
    <property type="project" value="UniProtKB-UniRule"/>
</dbReference>
<dbReference type="GO" id="GO:0000050">
    <property type="term" value="P:urea cycle"/>
    <property type="evidence" value="ECO:0007669"/>
    <property type="project" value="TreeGrafter"/>
</dbReference>
<dbReference type="CDD" id="cd01999">
    <property type="entry name" value="ASS"/>
    <property type="match status" value="1"/>
</dbReference>
<dbReference type="FunFam" id="3.40.50.620:FF:000019">
    <property type="entry name" value="Argininosuccinate synthase"/>
    <property type="match status" value="1"/>
</dbReference>
<dbReference type="FunFam" id="3.90.1260.10:FF:000007">
    <property type="entry name" value="Argininosuccinate synthase"/>
    <property type="match status" value="1"/>
</dbReference>
<dbReference type="Gene3D" id="3.90.1260.10">
    <property type="entry name" value="Argininosuccinate synthetase, chain A, domain 2"/>
    <property type="match status" value="1"/>
</dbReference>
<dbReference type="Gene3D" id="3.40.50.620">
    <property type="entry name" value="HUPs"/>
    <property type="match status" value="1"/>
</dbReference>
<dbReference type="Gene3D" id="1.20.5.470">
    <property type="entry name" value="Single helix bin"/>
    <property type="match status" value="1"/>
</dbReference>
<dbReference type="HAMAP" id="MF_00005">
    <property type="entry name" value="Arg_succ_synth_type1"/>
    <property type="match status" value="1"/>
</dbReference>
<dbReference type="InterPro" id="IPR048268">
    <property type="entry name" value="Arginosuc_syn_C"/>
</dbReference>
<dbReference type="InterPro" id="IPR048267">
    <property type="entry name" value="Arginosuc_syn_N"/>
</dbReference>
<dbReference type="InterPro" id="IPR001518">
    <property type="entry name" value="Arginosuc_synth"/>
</dbReference>
<dbReference type="InterPro" id="IPR018223">
    <property type="entry name" value="Arginosuc_synth_CS"/>
</dbReference>
<dbReference type="InterPro" id="IPR023434">
    <property type="entry name" value="Arginosuc_synth_type_1_subfam"/>
</dbReference>
<dbReference type="InterPro" id="IPR024074">
    <property type="entry name" value="AS_cat/multimer_dom_body"/>
</dbReference>
<dbReference type="InterPro" id="IPR014729">
    <property type="entry name" value="Rossmann-like_a/b/a_fold"/>
</dbReference>
<dbReference type="NCBIfam" id="TIGR00032">
    <property type="entry name" value="argG"/>
    <property type="match status" value="1"/>
</dbReference>
<dbReference type="NCBIfam" id="NF001770">
    <property type="entry name" value="PRK00509.1"/>
    <property type="match status" value="1"/>
</dbReference>
<dbReference type="PANTHER" id="PTHR11587">
    <property type="entry name" value="ARGININOSUCCINATE SYNTHASE"/>
    <property type="match status" value="1"/>
</dbReference>
<dbReference type="PANTHER" id="PTHR11587:SF2">
    <property type="entry name" value="ARGININOSUCCINATE SYNTHASE"/>
    <property type="match status" value="1"/>
</dbReference>
<dbReference type="Pfam" id="PF20979">
    <property type="entry name" value="Arginosuc_syn_C"/>
    <property type="match status" value="1"/>
</dbReference>
<dbReference type="Pfam" id="PF00764">
    <property type="entry name" value="Arginosuc_synth"/>
    <property type="match status" value="1"/>
</dbReference>
<dbReference type="SUPFAM" id="SSF52402">
    <property type="entry name" value="Adenine nucleotide alpha hydrolases-like"/>
    <property type="match status" value="1"/>
</dbReference>
<dbReference type="SUPFAM" id="SSF69864">
    <property type="entry name" value="Argininosuccinate synthetase, C-terminal domain"/>
    <property type="match status" value="1"/>
</dbReference>
<dbReference type="PROSITE" id="PS00564">
    <property type="entry name" value="ARGININOSUCCIN_SYN_1"/>
    <property type="match status" value="1"/>
</dbReference>
<dbReference type="PROSITE" id="PS00565">
    <property type="entry name" value="ARGININOSUCCIN_SYN_2"/>
    <property type="match status" value="1"/>
</dbReference>